<organism>
    <name type="scientific">Pseudomonas fluorescens (strain SBW25)</name>
    <dbReference type="NCBI Taxonomy" id="216595"/>
    <lineage>
        <taxon>Bacteria</taxon>
        <taxon>Pseudomonadati</taxon>
        <taxon>Pseudomonadota</taxon>
        <taxon>Gammaproteobacteria</taxon>
        <taxon>Pseudomonadales</taxon>
        <taxon>Pseudomonadaceae</taxon>
        <taxon>Pseudomonas</taxon>
    </lineage>
</organism>
<accession>C3JYD6</accession>
<reference key="1">
    <citation type="journal article" date="2009" name="Genome Biol.">
        <title>Genomic and genetic analyses of diversity and plant interactions of Pseudomonas fluorescens.</title>
        <authorList>
            <person name="Silby M.W."/>
            <person name="Cerdeno-Tarraga A.M."/>
            <person name="Vernikos G.S."/>
            <person name="Giddens S.R."/>
            <person name="Jackson R.W."/>
            <person name="Preston G.M."/>
            <person name="Zhang X.-X."/>
            <person name="Moon C.D."/>
            <person name="Gehrig S.M."/>
            <person name="Godfrey S.A.C."/>
            <person name="Knight C.G."/>
            <person name="Malone J.G."/>
            <person name="Robinson Z."/>
            <person name="Spiers A.J."/>
            <person name="Harris S."/>
            <person name="Challis G.L."/>
            <person name="Yaxley A.M."/>
            <person name="Harris D."/>
            <person name="Seeger K."/>
            <person name="Murphy L."/>
            <person name="Rutter S."/>
            <person name="Squares R."/>
            <person name="Quail M.A."/>
            <person name="Saunders E."/>
            <person name="Mavromatis K."/>
            <person name="Brettin T.S."/>
            <person name="Bentley S.D."/>
            <person name="Hothersall J."/>
            <person name="Stephens E."/>
            <person name="Thomas C.M."/>
            <person name="Parkhill J."/>
            <person name="Levy S.B."/>
            <person name="Rainey P.B."/>
            <person name="Thomson N.R."/>
        </authorList>
    </citation>
    <scope>NUCLEOTIDE SEQUENCE [LARGE SCALE GENOMIC DNA]</scope>
    <source>
        <strain>SBW25</strain>
    </source>
</reference>
<evidence type="ECO:0000255" key="1">
    <source>
        <dbReference type="HAMAP-Rule" id="MF_00575"/>
    </source>
</evidence>
<feature type="chain" id="PRO_1000212096" description="UDP-2,3-diacylglucosamine hydrolase">
    <location>
        <begin position="1"/>
        <end position="249"/>
    </location>
</feature>
<feature type="binding site" evidence="1">
    <location>
        <position position="7"/>
    </location>
    <ligand>
        <name>Mn(2+)</name>
        <dbReference type="ChEBI" id="CHEBI:29035"/>
        <label>1</label>
    </ligand>
</feature>
<feature type="binding site" evidence="1">
    <location>
        <position position="9"/>
    </location>
    <ligand>
        <name>Mn(2+)</name>
        <dbReference type="ChEBI" id="CHEBI:29035"/>
        <label>1</label>
    </ligand>
</feature>
<feature type="binding site" evidence="1">
    <location>
        <position position="40"/>
    </location>
    <ligand>
        <name>Mn(2+)</name>
        <dbReference type="ChEBI" id="CHEBI:29035"/>
        <label>1</label>
    </ligand>
</feature>
<feature type="binding site" evidence="1">
    <location>
        <position position="40"/>
    </location>
    <ligand>
        <name>Mn(2+)</name>
        <dbReference type="ChEBI" id="CHEBI:29035"/>
        <label>2</label>
    </ligand>
</feature>
<feature type="binding site" evidence="1">
    <location>
        <begin position="78"/>
        <end position="79"/>
    </location>
    <ligand>
        <name>substrate</name>
    </ligand>
</feature>
<feature type="binding site" evidence="1">
    <location>
        <position position="78"/>
    </location>
    <ligand>
        <name>Mn(2+)</name>
        <dbReference type="ChEBI" id="CHEBI:29035"/>
        <label>2</label>
    </ligand>
</feature>
<feature type="binding site" evidence="1">
    <location>
        <position position="113"/>
    </location>
    <ligand>
        <name>Mn(2+)</name>
        <dbReference type="ChEBI" id="CHEBI:29035"/>
        <label>2</label>
    </ligand>
</feature>
<feature type="binding site" evidence="1">
    <location>
        <position position="121"/>
    </location>
    <ligand>
        <name>substrate</name>
    </ligand>
</feature>
<feature type="binding site" evidence="1">
    <location>
        <position position="159"/>
    </location>
    <ligand>
        <name>substrate</name>
    </ligand>
</feature>
<feature type="binding site" evidence="1">
    <location>
        <position position="163"/>
    </location>
    <ligand>
        <name>substrate</name>
    </ligand>
</feature>
<feature type="binding site" evidence="1">
    <location>
        <position position="166"/>
    </location>
    <ligand>
        <name>substrate</name>
    </ligand>
</feature>
<feature type="binding site" evidence="1">
    <location>
        <position position="194"/>
    </location>
    <ligand>
        <name>Mn(2+)</name>
        <dbReference type="ChEBI" id="CHEBI:29035"/>
        <label>2</label>
    </ligand>
</feature>
<feature type="binding site" evidence="1">
    <location>
        <position position="194"/>
    </location>
    <ligand>
        <name>substrate</name>
    </ligand>
</feature>
<feature type="binding site" evidence="1">
    <location>
        <position position="196"/>
    </location>
    <ligand>
        <name>Mn(2+)</name>
        <dbReference type="ChEBI" id="CHEBI:29035"/>
        <label>1</label>
    </ligand>
</feature>
<comment type="function">
    <text evidence="1">Hydrolyzes the pyrophosphate bond of UDP-2,3-diacylglucosamine to yield 2,3-diacylglucosamine 1-phosphate (lipid X) and UMP by catalyzing the attack of water at the alpha-P atom. Involved in the biosynthesis of lipid A, a phosphorylated glycolipid that anchors the lipopolysaccharide to the outer membrane of the cell.</text>
</comment>
<comment type="catalytic activity">
    <reaction evidence="1">
        <text>UDP-2-N,3-O-bis[(3R)-3-hydroxytetradecanoyl]-alpha-D-glucosamine + H2O = 2-N,3-O-bis[(3R)-3-hydroxytetradecanoyl]-alpha-D-glucosaminyl 1-phosphate + UMP + 2 H(+)</text>
        <dbReference type="Rhea" id="RHEA:25213"/>
        <dbReference type="ChEBI" id="CHEBI:15377"/>
        <dbReference type="ChEBI" id="CHEBI:15378"/>
        <dbReference type="ChEBI" id="CHEBI:57865"/>
        <dbReference type="ChEBI" id="CHEBI:57957"/>
        <dbReference type="ChEBI" id="CHEBI:78847"/>
        <dbReference type="EC" id="3.6.1.54"/>
    </reaction>
</comment>
<comment type="cofactor">
    <cofactor evidence="1">
        <name>Mn(2+)</name>
        <dbReference type="ChEBI" id="CHEBI:29035"/>
    </cofactor>
    <text evidence="1">Binds 2 Mn(2+) ions per subunit in a binuclear metal center.</text>
</comment>
<comment type="pathway">
    <text evidence="1">Glycolipid biosynthesis; lipid IV(A) biosynthesis; lipid IV(A) from (3R)-3-hydroxytetradecanoyl-[acyl-carrier-protein] and UDP-N-acetyl-alpha-D-glucosamine: step 4/6.</text>
</comment>
<comment type="subcellular location">
    <subcellularLocation>
        <location evidence="1">Cell inner membrane</location>
        <topology evidence="1">Peripheral membrane protein</topology>
        <orientation evidence="1">Cytoplasmic side</orientation>
    </subcellularLocation>
</comment>
<comment type="similarity">
    <text evidence="1">Belongs to the LpxH family.</text>
</comment>
<keyword id="KW-0997">Cell inner membrane</keyword>
<keyword id="KW-1003">Cell membrane</keyword>
<keyword id="KW-0378">Hydrolase</keyword>
<keyword id="KW-0441">Lipid A biosynthesis</keyword>
<keyword id="KW-0444">Lipid biosynthesis</keyword>
<keyword id="KW-0443">Lipid metabolism</keyword>
<keyword id="KW-0464">Manganese</keyword>
<keyword id="KW-0472">Membrane</keyword>
<keyword id="KW-0479">Metal-binding</keyword>
<dbReference type="EC" id="3.6.1.54" evidence="1"/>
<dbReference type="EMBL" id="AM181176">
    <property type="protein sequence ID" value="CAY50220.1"/>
    <property type="molecule type" value="Genomic_DNA"/>
</dbReference>
<dbReference type="RefSeq" id="WP_012724995.1">
    <property type="nucleotide sequence ID" value="NC_012660.1"/>
</dbReference>
<dbReference type="SMR" id="C3JYD6"/>
<dbReference type="STRING" id="294.SRM1_03486"/>
<dbReference type="PATRIC" id="fig|216595.4.peg.4019"/>
<dbReference type="eggNOG" id="COG2908">
    <property type="taxonomic scope" value="Bacteria"/>
</dbReference>
<dbReference type="HOGENOM" id="CLU_074586_0_0_6"/>
<dbReference type="OrthoDB" id="9783283at2"/>
<dbReference type="UniPathway" id="UPA00359">
    <property type="reaction ID" value="UER00480"/>
</dbReference>
<dbReference type="GO" id="GO:0005737">
    <property type="term" value="C:cytoplasm"/>
    <property type="evidence" value="ECO:0007669"/>
    <property type="project" value="InterPro"/>
</dbReference>
<dbReference type="GO" id="GO:0019897">
    <property type="term" value="C:extrinsic component of plasma membrane"/>
    <property type="evidence" value="ECO:0007669"/>
    <property type="project" value="UniProtKB-UniRule"/>
</dbReference>
<dbReference type="GO" id="GO:0030145">
    <property type="term" value="F:manganese ion binding"/>
    <property type="evidence" value="ECO:0007669"/>
    <property type="project" value="UniProtKB-UniRule"/>
</dbReference>
<dbReference type="GO" id="GO:0008758">
    <property type="term" value="F:UDP-2,3-diacylglucosamine hydrolase activity"/>
    <property type="evidence" value="ECO:0007669"/>
    <property type="project" value="UniProtKB-UniRule"/>
</dbReference>
<dbReference type="GO" id="GO:0009245">
    <property type="term" value="P:lipid A biosynthetic process"/>
    <property type="evidence" value="ECO:0007669"/>
    <property type="project" value="UniProtKB-UniRule"/>
</dbReference>
<dbReference type="CDD" id="cd07398">
    <property type="entry name" value="MPP_YbbF-LpxH"/>
    <property type="match status" value="1"/>
</dbReference>
<dbReference type="Gene3D" id="3.60.21.10">
    <property type="match status" value="1"/>
</dbReference>
<dbReference type="HAMAP" id="MF_00575">
    <property type="entry name" value="LpxH"/>
    <property type="match status" value="1"/>
</dbReference>
<dbReference type="InterPro" id="IPR004843">
    <property type="entry name" value="Calcineurin-like_PHP_ApaH"/>
</dbReference>
<dbReference type="InterPro" id="IPR043461">
    <property type="entry name" value="LpxH-like"/>
</dbReference>
<dbReference type="InterPro" id="IPR029052">
    <property type="entry name" value="Metallo-depent_PP-like"/>
</dbReference>
<dbReference type="InterPro" id="IPR010138">
    <property type="entry name" value="UDP-diacylglucosamine_Hdrlase"/>
</dbReference>
<dbReference type="NCBIfam" id="TIGR01854">
    <property type="entry name" value="lipid_A_lpxH"/>
    <property type="match status" value="1"/>
</dbReference>
<dbReference type="NCBIfam" id="NF003743">
    <property type="entry name" value="PRK05340.1"/>
    <property type="match status" value="1"/>
</dbReference>
<dbReference type="PANTHER" id="PTHR34990:SF1">
    <property type="entry name" value="UDP-2,3-DIACYLGLUCOSAMINE HYDROLASE"/>
    <property type="match status" value="1"/>
</dbReference>
<dbReference type="PANTHER" id="PTHR34990">
    <property type="entry name" value="UDP-2,3-DIACYLGLUCOSAMINE HYDROLASE-RELATED"/>
    <property type="match status" value="1"/>
</dbReference>
<dbReference type="Pfam" id="PF00149">
    <property type="entry name" value="Metallophos"/>
    <property type="match status" value="1"/>
</dbReference>
<dbReference type="SUPFAM" id="SSF56300">
    <property type="entry name" value="Metallo-dependent phosphatases"/>
    <property type="match status" value="1"/>
</dbReference>
<sequence length="249" mass="28142">MILLISDLHLEEERPDITRAFLDLLHHRARGAQALYILGDFFEAWIGDDGMTPFQRSICAALRELSDSGTPIFIMHGNRDFLIGKAFCKAAGATLLKDPSVVQLHGEPVLLMHGDSLCTRDVGYMKLRRILRNPIVLFILRHLPLRTRHKLARKLRSESRAQTRMKANDIVDVTPEEVPRVMQQFGVRTLVHGHTHRPAIHKLQIGDQAAKRIVLGDWDKQGWALQVDEQGFQLAAFDFVNPQLALPGA</sequence>
<name>LPXH_PSEFS</name>
<protein>
    <recommendedName>
        <fullName evidence="1">UDP-2,3-diacylglucosamine hydrolase</fullName>
        <ecNumber evidence="1">3.6.1.54</ecNumber>
    </recommendedName>
    <alternativeName>
        <fullName evidence="1">UDP-2,3-diacylglucosamine diphosphatase</fullName>
    </alternativeName>
</protein>
<gene>
    <name evidence="1" type="primary">lpxH</name>
    <name type="ordered locus">PFLU_3874</name>
</gene>
<proteinExistence type="inferred from homology"/>